<protein>
    <recommendedName>
        <fullName>Classical arabinogalactan protein 9</fullName>
    </recommendedName>
</protein>
<proteinExistence type="evidence at protein level"/>
<dbReference type="EMBL" id="AF195890">
    <property type="protein sequence ID" value="AAG24277.1"/>
    <property type="molecule type" value="mRNA"/>
</dbReference>
<dbReference type="EMBL" id="AC005396">
    <property type="protein sequence ID" value="AAC61286.1"/>
    <property type="molecule type" value="Genomic_DNA"/>
</dbReference>
<dbReference type="EMBL" id="CP002685">
    <property type="protein sequence ID" value="AEC06347.1"/>
    <property type="molecule type" value="Genomic_DNA"/>
</dbReference>
<dbReference type="EMBL" id="AF324669">
    <property type="protein sequence ID" value="AAG40020.2"/>
    <property type="molecule type" value="mRNA"/>
</dbReference>
<dbReference type="EMBL" id="AF326868">
    <property type="protein sequence ID" value="AAG41450.1"/>
    <property type="molecule type" value="mRNA"/>
</dbReference>
<dbReference type="EMBL" id="AF339690">
    <property type="protein sequence ID" value="AAK00372.1"/>
    <property type="molecule type" value="mRNA"/>
</dbReference>
<dbReference type="EMBL" id="AY078968">
    <property type="protein sequence ID" value="AAL84965.1"/>
    <property type="molecule type" value="mRNA"/>
</dbReference>
<dbReference type="EMBL" id="AY125554">
    <property type="protein sequence ID" value="AAM78064.1"/>
    <property type="molecule type" value="mRNA"/>
</dbReference>
<dbReference type="PIR" id="F84522">
    <property type="entry name" value="F84522"/>
</dbReference>
<dbReference type="RefSeq" id="NP_179095.1">
    <molecule id="Q9C5S0-1"/>
    <property type="nucleotide sequence ID" value="NM_127053.5"/>
</dbReference>
<dbReference type="BioGRID" id="1337">
    <property type="interactions" value="1"/>
</dbReference>
<dbReference type="FunCoup" id="Q9C5S0">
    <property type="interactions" value="13"/>
</dbReference>
<dbReference type="STRING" id="3702.Q9C5S0"/>
<dbReference type="GlyCosmos" id="Q9C5S0">
    <property type="glycosylation" value="4 sites, No reported glycans"/>
</dbReference>
<dbReference type="GlyGen" id="Q9C5S0">
    <property type="glycosylation" value="8 sites"/>
</dbReference>
<dbReference type="PaxDb" id="3702-AT2G14890.1"/>
<dbReference type="EnsemblPlants" id="AT2G14890.1">
    <molecule id="Q9C5S0-1"/>
    <property type="protein sequence ID" value="AT2G14890.1"/>
    <property type="gene ID" value="AT2G14890"/>
</dbReference>
<dbReference type="GeneID" id="815978"/>
<dbReference type="Gramene" id="AT2G14890.1">
    <molecule id="Q9C5S0-1"/>
    <property type="protein sequence ID" value="AT2G14890.1"/>
    <property type="gene ID" value="AT2G14890"/>
</dbReference>
<dbReference type="KEGG" id="ath:AT2G14890"/>
<dbReference type="Araport" id="AT2G14890"/>
<dbReference type="TAIR" id="AT2G14890">
    <property type="gene designation" value="AGP9"/>
</dbReference>
<dbReference type="eggNOG" id="ENOG502RZNG">
    <property type="taxonomic scope" value="Eukaryota"/>
</dbReference>
<dbReference type="HOGENOM" id="CLU_1527270_0_0_1"/>
<dbReference type="InParanoid" id="Q9C5S0"/>
<dbReference type="OrthoDB" id="1114248at2759"/>
<dbReference type="PRO" id="PR:Q9C5S0"/>
<dbReference type="Proteomes" id="UP000006548">
    <property type="component" value="Chromosome 2"/>
</dbReference>
<dbReference type="ExpressionAtlas" id="Q9C5S0">
    <property type="expression patterns" value="baseline and differential"/>
</dbReference>
<dbReference type="GO" id="GO:0005886">
    <property type="term" value="C:plasma membrane"/>
    <property type="evidence" value="ECO:0007669"/>
    <property type="project" value="UniProtKB-SubCell"/>
</dbReference>
<dbReference type="GO" id="GO:0098552">
    <property type="term" value="C:side of membrane"/>
    <property type="evidence" value="ECO:0007669"/>
    <property type="project" value="UniProtKB-KW"/>
</dbReference>
<dbReference type="InterPro" id="IPR044981">
    <property type="entry name" value="AGP9/17/18"/>
</dbReference>
<dbReference type="PANTHER" id="PTHR37209:SF1">
    <property type="entry name" value="CLASSICAL ARABINOGALACTAN PROTEIN 9"/>
    <property type="match status" value="1"/>
</dbReference>
<dbReference type="PANTHER" id="PTHR37209">
    <property type="entry name" value="LYSINE-RICH ARABINOGALACTAN PROTEIN 17-RELATED"/>
    <property type="match status" value="1"/>
</dbReference>
<dbReference type="PRINTS" id="PR01217">
    <property type="entry name" value="PRICHEXTENSN"/>
</dbReference>
<accession>Q9C5S0</accession>
<accession>O82327</accession>
<reference key="1">
    <citation type="journal article" date="2000" name="Plant Cell">
        <title>The classical arabinogalactan protein gene family of Arabidopsis.</title>
        <authorList>
            <person name="Schultz C.J."/>
            <person name="Johnson K.L."/>
            <person name="Currie G."/>
            <person name="Bacic A."/>
        </authorList>
    </citation>
    <scope>NUCLEOTIDE SEQUENCE [MRNA]</scope>
    <scope>PROTEIN SEQUENCE OF 21-33</scope>
    <scope>HYDROXYLATION AT PRO-23; PRO-26; PRO-27; PRO-31 AND PRO-33</scope>
    <scope>PYROGLUTAMATE FORMATION AT GLN-21</scope>
    <scope>TISSUE SPECIFICITY</scope>
    <source>
        <strain>cv. Columbia</strain>
    </source>
</reference>
<reference key="2">
    <citation type="journal article" date="1999" name="Nature">
        <title>Sequence and analysis of chromosome 2 of the plant Arabidopsis thaliana.</title>
        <authorList>
            <person name="Lin X."/>
            <person name="Kaul S."/>
            <person name="Rounsley S.D."/>
            <person name="Shea T.P."/>
            <person name="Benito M.-I."/>
            <person name="Town C.D."/>
            <person name="Fujii C.Y."/>
            <person name="Mason T.M."/>
            <person name="Bowman C.L."/>
            <person name="Barnstead M.E."/>
            <person name="Feldblyum T.V."/>
            <person name="Buell C.R."/>
            <person name="Ketchum K.A."/>
            <person name="Lee J.J."/>
            <person name="Ronning C.M."/>
            <person name="Koo H.L."/>
            <person name="Moffat K.S."/>
            <person name="Cronin L.A."/>
            <person name="Shen M."/>
            <person name="Pai G."/>
            <person name="Van Aken S."/>
            <person name="Umayam L."/>
            <person name="Tallon L.J."/>
            <person name="Gill J.E."/>
            <person name="Adams M.D."/>
            <person name="Carrera A.J."/>
            <person name="Creasy T.H."/>
            <person name="Goodman H.M."/>
            <person name="Somerville C.R."/>
            <person name="Copenhaver G.P."/>
            <person name="Preuss D."/>
            <person name="Nierman W.C."/>
            <person name="White O."/>
            <person name="Eisen J.A."/>
            <person name="Salzberg S.L."/>
            <person name="Fraser C.M."/>
            <person name="Venter J.C."/>
        </authorList>
    </citation>
    <scope>NUCLEOTIDE SEQUENCE [LARGE SCALE GENOMIC DNA]</scope>
    <source>
        <strain>cv. Columbia</strain>
    </source>
</reference>
<reference key="3">
    <citation type="journal article" date="2017" name="Plant J.">
        <title>Araport11: a complete reannotation of the Arabidopsis thaliana reference genome.</title>
        <authorList>
            <person name="Cheng C.Y."/>
            <person name="Krishnakumar V."/>
            <person name="Chan A.P."/>
            <person name="Thibaud-Nissen F."/>
            <person name="Schobel S."/>
            <person name="Town C.D."/>
        </authorList>
    </citation>
    <scope>GENOME REANNOTATION</scope>
    <source>
        <strain>cv. Columbia</strain>
    </source>
</reference>
<reference key="4">
    <citation type="journal article" date="2003" name="Science">
        <title>Empirical analysis of transcriptional activity in the Arabidopsis genome.</title>
        <authorList>
            <person name="Yamada K."/>
            <person name="Lim J."/>
            <person name="Dale J.M."/>
            <person name="Chen H."/>
            <person name="Shinn P."/>
            <person name="Palm C.J."/>
            <person name="Southwick A.M."/>
            <person name="Wu H.C."/>
            <person name="Kim C.J."/>
            <person name="Nguyen M."/>
            <person name="Pham P.K."/>
            <person name="Cheuk R.F."/>
            <person name="Karlin-Newmann G."/>
            <person name="Liu S.X."/>
            <person name="Lam B."/>
            <person name="Sakano H."/>
            <person name="Wu T."/>
            <person name="Yu G."/>
            <person name="Miranda M."/>
            <person name="Quach H.L."/>
            <person name="Tripp M."/>
            <person name="Chang C.H."/>
            <person name="Lee J.M."/>
            <person name="Toriumi M.J."/>
            <person name="Chan M.M."/>
            <person name="Tang C.C."/>
            <person name="Onodera C.S."/>
            <person name="Deng J.M."/>
            <person name="Akiyama K."/>
            <person name="Ansari Y."/>
            <person name="Arakawa T."/>
            <person name="Banh J."/>
            <person name="Banno F."/>
            <person name="Bowser L."/>
            <person name="Brooks S.Y."/>
            <person name="Carninci P."/>
            <person name="Chao Q."/>
            <person name="Choy N."/>
            <person name="Enju A."/>
            <person name="Goldsmith A.D."/>
            <person name="Gurjal M."/>
            <person name="Hansen N.F."/>
            <person name="Hayashizaki Y."/>
            <person name="Johnson-Hopson C."/>
            <person name="Hsuan V.W."/>
            <person name="Iida K."/>
            <person name="Karnes M."/>
            <person name="Khan S."/>
            <person name="Koesema E."/>
            <person name="Ishida J."/>
            <person name="Jiang P.X."/>
            <person name="Jones T."/>
            <person name="Kawai J."/>
            <person name="Kamiya A."/>
            <person name="Meyers C."/>
            <person name="Nakajima M."/>
            <person name="Narusaka M."/>
            <person name="Seki M."/>
            <person name="Sakurai T."/>
            <person name="Satou M."/>
            <person name="Tamse R."/>
            <person name="Vaysberg M."/>
            <person name="Wallender E.K."/>
            <person name="Wong C."/>
            <person name="Yamamura Y."/>
            <person name="Yuan S."/>
            <person name="Shinozaki K."/>
            <person name="Davis R.W."/>
            <person name="Theologis A."/>
            <person name="Ecker J.R."/>
        </authorList>
    </citation>
    <scope>NUCLEOTIDE SEQUENCE [LARGE SCALE MRNA]</scope>
    <source>
        <strain>cv. Columbia</strain>
    </source>
</reference>
<reference key="5">
    <citation type="journal article" date="2002" name="Plant Physiol.">
        <title>Using genomic resources to guide research directions. The arabinogalactan protein gene family as a test case.</title>
        <authorList>
            <person name="Schultz C.J."/>
            <person name="Rumsewicz M.P."/>
            <person name="Johnson K.L."/>
            <person name="Jones B.J."/>
            <person name="Gaspar Y.M."/>
            <person name="Bacic A."/>
        </authorList>
    </citation>
    <scope>GENE FAMILY</scope>
    <scope>NOMENCLATURE</scope>
</reference>
<sequence>MARSFAIAVICIVLIAGVTGQAPTSPPTATPAPPTPTTPPPAATPPPVSAPPPVTTSPPPVTTAPPPANPPPPVSSPPPASPPPATPPPVASPPPPVASPPPATPPPVATPPPAPLASPPAQVPAPAPTTKPDSPSPSPSSSPPLPSSDAPGPSTDSISPAPSPTDVNDQNGASKMVSSLVFGSVLVWFMI</sequence>
<keyword id="KW-0025">Alternative splicing</keyword>
<keyword id="KW-1003">Cell membrane</keyword>
<keyword id="KW-0903">Direct protein sequencing</keyword>
<keyword id="KW-0325">Glycoprotein</keyword>
<keyword id="KW-0336">GPI-anchor</keyword>
<keyword id="KW-0379">Hydroxylation</keyword>
<keyword id="KW-0449">Lipoprotein</keyword>
<keyword id="KW-0472">Membrane</keyword>
<keyword id="KW-0654">Proteoglycan</keyword>
<keyword id="KW-0873">Pyrrolidone carboxylic acid</keyword>
<keyword id="KW-1185">Reference proteome</keyword>
<keyword id="KW-0732">Signal</keyword>
<feature type="signal peptide" evidence="3">
    <location>
        <begin position="1"/>
        <end position="20"/>
    </location>
</feature>
<feature type="chain" id="PRO_0000268999" description="Classical arabinogalactan protein 9">
    <location>
        <begin position="21"/>
        <end position="172"/>
    </location>
</feature>
<feature type="propeptide" id="PRO_0000269000" description="Removed in mature form" evidence="1">
    <location>
        <begin position="173"/>
        <end position="191"/>
    </location>
</feature>
<feature type="region of interest" description="Disordered" evidence="2">
    <location>
        <begin position="20"/>
        <end position="172"/>
    </location>
</feature>
<feature type="compositionally biased region" description="Pro residues" evidence="2">
    <location>
        <begin position="24"/>
        <end position="146"/>
    </location>
</feature>
<feature type="compositionally biased region" description="Polar residues" evidence="2">
    <location>
        <begin position="155"/>
        <end position="172"/>
    </location>
</feature>
<feature type="modified residue" description="Pyrrolidone carboxylic acid" evidence="3">
    <location>
        <position position="21"/>
    </location>
</feature>
<feature type="modified residue" description="4-hydroxyproline" evidence="3">
    <location>
        <position position="23"/>
    </location>
</feature>
<feature type="modified residue" description="4-hydroxyproline" evidence="3">
    <location>
        <position position="26"/>
    </location>
</feature>
<feature type="modified residue" description="4-hydroxyproline" evidence="3">
    <location>
        <position position="27"/>
    </location>
</feature>
<feature type="modified residue" description="4-hydroxyproline" evidence="3">
    <location>
        <position position="31"/>
    </location>
</feature>
<feature type="modified residue" description="4-hydroxyproline" evidence="3">
    <location>
        <position position="33"/>
    </location>
</feature>
<feature type="lipid moiety-binding region" description="GPI-anchor amidated glycine" evidence="1">
    <location>
        <position position="172"/>
    </location>
</feature>
<feature type="glycosylation site" description="O-linked (Ara...) hydroxyproline" evidence="1">
    <location>
        <position position="26"/>
    </location>
</feature>
<feature type="glycosylation site" description="O-linked (Ara...) hydroxyproline" evidence="1">
    <location>
        <position position="27"/>
    </location>
</feature>
<feature type="glycosylation site" description="O-linked (Ara...) hydroxyproline" evidence="1">
    <location>
        <position position="31"/>
    </location>
</feature>
<feature type="glycosylation site" description="O-linked (Ara...) hydroxyproline" evidence="1">
    <location>
        <position position="33"/>
    </location>
</feature>
<feature type="sequence conflict" description="In Ref. 4; AAG40020." evidence="4" ref="4">
    <original>V</original>
    <variation>G</variation>
    <location>
        <position position="9"/>
    </location>
</feature>
<feature type="sequence conflict" description="In Ref. 4; AAG40020." evidence="4" ref="4">
    <original>G</original>
    <variation>C</variation>
    <location>
        <position position="17"/>
    </location>
</feature>
<feature type="sequence conflict" description="In Ref. 1; AA sequence." evidence="4" ref="1">
    <original>T</original>
    <variation>A</variation>
    <location>
        <position position="30"/>
    </location>
</feature>
<gene>
    <name type="primary">AGP9</name>
    <name type="ordered locus">At2g14890</name>
    <name type="ORF">T26I20.5</name>
</gene>
<name>AGP9_ARATH</name>
<comment type="function">
    <text>Proteoglycan that seems to be implicated in diverse developmental roles such as differentiation, cell-cell recognition, embryogenesis and programmed cell death.</text>
</comment>
<comment type="subcellular location">
    <subcellularLocation>
        <location evidence="4">Cell membrane</location>
        <topology evidence="4">Lipid-anchor</topology>
        <topology evidence="4">GPI-anchor</topology>
    </subcellularLocation>
</comment>
<comment type="alternative products">
    <event type="alternative splicing"/>
    <isoform>
        <id>Q9C5S0-1</id>
        <name>1</name>
        <sequence type="displayed"/>
    </isoform>
    <text>A number of isoforms are produced. According to EST sequences.</text>
</comment>
<comment type="tissue specificity">
    <text evidence="3">Predominantly expressed in flowers and at a lower level in leaves and siliques.</text>
</comment>
<comment type="PTM">
    <text>O-glycosylated on hydroxyprolines; noncontiguous hydroxylproline residues are glycosylated with arabinogalactan.</text>
</comment>
<comment type="similarity">
    <text evidence="4">Belongs to the classical AGP family.</text>
</comment>
<evidence type="ECO:0000255" key="1"/>
<evidence type="ECO:0000256" key="2">
    <source>
        <dbReference type="SAM" id="MobiDB-lite"/>
    </source>
</evidence>
<evidence type="ECO:0000269" key="3">
    <source>
    </source>
</evidence>
<evidence type="ECO:0000305" key="4"/>
<organism>
    <name type="scientific">Arabidopsis thaliana</name>
    <name type="common">Mouse-ear cress</name>
    <dbReference type="NCBI Taxonomy" id="3702"/>
    <lineage>
        <taxon>Eukaryota</taxon>
        <taxon>Viridiplantae</taxon>
        <taxon>Streptophyta</taxon>
        <taxon>Embryophyta</taxon>
        <taxon>Tracheophyta</taxon>
        <taxon>Spermatophyta</taxon>
        <taxon>Magnoliopsida</taxon>
        <taxon>eudicotyledons</taxon>
        <taxon>Gunneridae</taxon>
        <taxon>Pentapetalae</taxon>
        <taxon>rosids</taxon>
        <taxon>malvids</taxon>
        <taxon>Brassicales</taxon>
        <taxon>Brassicaceae</taxon>
        <taxon>Camelineae</taxon>
        <taxon>Arabidopsis</taxon>
    </lineage>
</organism>